<name>Y3071_BURMS</name>
<reference key="1">
    <citation type="journal article" date="2010" name="Genome Biol. Evol.">
        <title>Continuing evolution of Burkholderia mallei through genome reduction and large-scale rearrangements.</title>
        <authorList>
            <person name="Losada L."/>
            <person name="Ronning C.M."/>
            <person name="DeShazer D."/>
            <person name="Woods D."/>
            <person name="Fedorova N."/>
            <person name="Kim H.S."/>
            <person name="Shabalina S.A."/>
            <person name="Pearson T.R."/>
            <person name="Brinkac L."/>
            <person name="Tan P."/>
            <person name="Nandi T."/>
            <person name="Crabtree J."/>
            <person name="Badger J."/>
            <person name="Beckstrom-Sternberg S."/>
            <person name="Saqib M."/>
            <person name="Schutzer S.E."/>
            <person name="Keim P."/>
            <person name="Nierman W.C."/>
        </authorList>
    </citation>
    <scope>NUCLEOTIDE SEQUENCE [LARGE SCALE GENOMIC DNA]</scope>
    <source>
        <strain>SAVP1</strain>
    </source>
</reference>
<comment type="subcellular location">
    <subcellularLocation>
        <location evidence="1">Cell inner membrane</location>
        <topology evidence="1">Multi-pass membrane protein</topology>
    </subcellularLocation>
</comment>
<comment type="similarity">
    <text evidence="1">Belongs to the UPF0060 family.</text>
</comment>
<sequence>MLSLAKIAALFVLTAVAEIVGCYLPWLVLKAGKPAWLLAPAALSLALFAWLLTLHPAAAARTYAAYGGVYIAVALAWLRIVDGVPLSRWDVAGAALALAGMSVIALQPRG</sequence>
<gene>
    <name type="ordered locus">BMASAVP1_A1271</name>
</gene>
<evidence type="ECO:0000255" key="1">
    <source>
        <dbReference type="HAMAP-Rule" id="MF_00010"/>
    </source>
</evidence>
<accession>A1V303</accession>
<feature type="chain" id="PRO_1000000759" description="UPF0060 membrane protein BMASAVP1_A1271">
    <location>
        <begin position="1"/>
        <end position="110"/>
    </location>
</feature>
<feature type="transmembrane region" description="Helical" evidence="1">
    <location>
        <begin position="9"/>
        <end position="29"/>
    </location>
</feature>
<feature type="transmembrane region" description="Helical" evidence="1">
    <location>
        <begin position="34"/>
        <end position="54"/>
    </location>
</feature>
<feature type="transmembrane region" description="Helical" evidence="1">
    <location>
        <begin position="64"/>
        <end position="84"/>
    </location>
</feature>
<feature type="transmembrane region" description="Helical" evidence="1">
    <location>
        <begin position="86"/>
        <end position="106"/>
    </location>
</feature>
<dbReference type="EMBL" id="CP000526">
    <property type="protein sequence ID" value="ABM52665.1"/>
    <property type="molecule type" value="Genomic_DNA"/>
</dbReference>
<dbReference type="RefSeq" id="WP_004193459.1">
    <property type="nucleotide sequence ID" value="NC_008785.1"/>
</dbReference>
<dbReference type="SMR" id="A1V303"/>
<dbReference type="KEGG" id="bmv:BMASAVP1_A1271"/>
<dbReference type="HOGENOM" id="CLU_117653_2_0_4"/>
<dbReference type="GO" id="GO:0005886">
    <property type="term" value="C:plasma membrane"/>
    <property type="evidence" value="ECO:0007669"/>
    <property type="project" value="UniProtKB-SubCell"/>
</dbReference>
<dbReference type="HAMAP" id="MF_00010">
    <property type="entry name" value="UPF0060"/>
    <property type="match status" value="1"/>
</dbReference>
<dbReference type="InterPro" id="IPR003844">
    <property type="entry name" value="UPF0060"/>
</dbReference>
<dbReference type="NCBIfam" id="NF002586">
    <property type="entry name" value="PRK02237.1"/>
    <property type="match status" value="1"/>
</dbReference>
<dbReference type="PANTHER" id="PTHR36116">
    <property type="entry name" value="UPF0060 MEMBRANE PROTEIN YNFA"/>
    <property type="match status" value="1"/>
</dbReference>
<dbReference type="PANTHER" id="PTHR36116:SF1">
    <property type="entry name" value="UPF0060 MEMBRANE PROTEIN YNFA"/>
    <property type="match status" value="1"/>
</dbReference>
<dbReference type="Pfam" id="PF02694">
    <property type="entry name" value="UPF0060"/>
    <property type="match status" value="1"/>
</dbReference>
<dbReference type="SUPFAM" id="SSF103481">
    <property type="entry name" value="Multidrug resistance efflux transporter EmrE"/>
    <property type="match status" value="1"/>
</dbReference>
<organism>
    <name type="scientific">Burkholderia mallei (strain SAVP1)</name>
    <dbReference type="NCBI Taxonomy" id="320388"/>
    <lineage>
        <taxon>Bacteria</taxon>
        <taxon>Pseudomonadati</taxon>
        <taxon>Pseudomonadota</taxon>
        <taxon>Betaproteobacteria</taxon>
        <taxon>Burkholderiales</taxon>
        <taxon>Burkholderiaceae</taxon>
        <taxon>Burkholderia</taxon>
        <taxon>pseudomallei group</taxon>
    </lineage>
</organism>
<keyword id="KW-0997">Cell inner membrane</keyword>
<keyword id="KW-1003">Cell membrane</keyword>
<keyword id="KW-0472">Membrane</keyword>
<keyword id="KW-0812">Transmembrane</keyword>
<keyword id="KW-1133">Transmembrane helix</keyword>
<proteinExistence type="inferred from homology"/>
<protein>
    <recommendedName>
        <fullName evidence="1">UPF0060 membrane protein BMASAVP1_A1271</fullName>
    </recommendedName>
</protein>